<sequence>MSDQPVSQTAPPLYIVSGGAGAVGEQVARLTLSQFEGAEVPLIIIPNVRDLSQIAEVVERAAHQNGTILHTLMEPSLRRELMRLARERGVAEIDLVGSVLSRLATVLRKEPLGKPGLYQPRRSAYFERLDAIEYTVAHDDGNKPHELHQADIVLVGISRVGKTPLSMYLAVLGWKVANVPLVREVPLPAELFQVDPRRVIGLIVEAEQITARRRWRQRRMGVSIGGNYTSLDAAYDEVEWARRTFRQHGWTTINVTDKSIEESADEIITLISRRFSQLP</sequence>
<gene>
    <name type="ordered locus">Chy400_3210</name>
</gene>
<dbReference type="EC" id="2.7.11.32" evidence="1"/>
<dbReference type="EC" id="2.7.4.27" evidence="1"/>
<dbReference type="EMBL" id="CP001364">
    <property type="protein sequence ID" value="ACM54588.1"/>
    <property type="molecule type" value="Genomic_DNA"/>
</dbReference>
<dbReference type="SMR" id="B9LB15"/>
<dbReference type="KEGG" id="chl:Chy400_3210"/>
<dbReference type="HOGENOM" id="CLU_046206_2_1_0"/>
<dbReference type="OrthoDB" id="9782201at2"/>
<dbReference type="GO" id="GO:0043531">
    <property type="term" value="F:ADP binding"/>
    <property type="evidence" value="ECO:0007669"/>
    <property type="project" value="UniProtKB-UniRule"/>
</dbReference>
<dbReference type="GO" id="GO:0005524">
    <property type="term" value="F:ATP binding"/>
    <property type="evidence" value="ECO:0007669"/>
    <property type="project" value="InterPro"/>
</dbReference>
<dbReference type="GO" id="GO:0016776">
    <property type="term" value="F:phosphotransferase activity, phosphate group as acceptor"/>
    <property type="evidence" value="ECO:0007669"/>
    <property type="project" value="UniProtKB-UniRule"/>
</dbReference>
<dbReference type="GO" id="GO:0004674">
    <property type="term" value="F:protein serine/threonine kinase activity"/>
    <property type="evidence" value="ECO:0007669"/>
    <property type="project" value="UniProtKB-UniRule"/>
</dbReference>
<dbReference type="HAMAP" id="MF_00921">
    <property type="entry name" value="PDRP"/>
    <property type="match status" value="1"/>
</dbReference>
<dbReference type="InterPro" id="IPR005177">
    <property type="entry name" value="Kinase-pyrophosphorylase"/>
</dbReference>
<dbReference type="InterPro" id="IPR026565">
    <property type="entry name" value="PPDK_reg"/>
</dbReference>
<dbReference type="NCBIfam" id="NF003742">
    <property type="entry name" value="PRK05339.1"/>
    <property type="match status" value="1"/>
</dbReference>
<dbReference type="PANTHER" id="PTHR31756">
    <property type="entry name" value="PYRUVATE, PHOSPHATE DIKINASE REGULATORY PROTEIN 1, CHLOROPLASTIC"/>
    <property type="match status" value="1"/>
</dbReference>
<dbReference type="PANTHER" id="PTHR31756:SF3">
    <property type="entry name" value="PYRUVATE, PHOSPHATE DIKINASE REGULATORY PROTEIN 1, CHLOROPLASTIC"/>
    <property type="match status" value="1"/>
</dbReference>
<dbReference type="Pfam" id="PF03618">
    <property type="entry name" value="Kinase-PPPase"/>
    <property type="match status" value="1"/>
</dbReference>
<keyword id="KW-0418">Kinase</keyword>
<keyword id="KW-0547">Nucleotide-binding</keyword>
<keyword id="KW-0723">Serine/threonine-protein kinase</keyword>
<keyword id="KW-0808">Transferase</keyword>
<reference key="1">
    <citation type="submission" date="2009-01" db="EMBL/GenBank/DDBJ databases">
        <title>Complete sequence of Chloroflexus sp. Y-400-fl.</title>
        <authorList>
            <consortium name="US DOE Joint Genome Institute"/>
            <person name="Lucas S."/>
            <person name="Copeland A."/>
            <person name="Lapidus A."/>
            <person name="Glavina del Rio T."/>
            <person name="Dalin E."/>
            <person name="Tice H."/>
            <person name="Bruce D."/>
            <person name="Goodwin L."/>
            <person name="Pitluck S."/>
            <person name="Sims D."/>
            <person name="Kiss H."/>
            <person name="Brettin T."/>
            <person name="Detter J.C."/>
            <person name="Han C."/>
            <person name="Larimer F."/>
            <person name="Land M."/>
            <person name="Hauser L."/>
            <person name="Kyrpides N."/>
            <person name="Ovchinnikova G."/>
            <person name="Bryant D.A."/>
            <person name="Richardson P."/>
        </authorList>
    </citation>
    <scope>NUCLEOTIDE SEQUENCE [LARGE SCALE GENOMIC DNA]</scope>
    <source>
        <strain>ATCC 29364 / DSM 637 / Y-400-fl</strain>
    </source>
</reference>
<proteinExistence type="inferred from homology"/>
<evidence type="ECO:0000255" key="1">
    <source>
        <dbReference type="HAMAP-Rule" id="MF_00921"/>
    </source>
</evidence>
<protein>
    <recommendedName>
        <fullName evidence="1">Putative pyruvate, phosphate dikinase regulatory protein</fullName>
        <shortName evidence="1">PPDK regulatory protein</shortName>
        <ecNumber evidence="1">2.7.11.32</ecNumber>
        <ecNumber evidence="1">2.7.4.27</ecNumber>
    </recommendedName>
</protein>
<accession>B9LB15</accession>
<comment type="function">
    <text evidence="1">Bifunctional serine/threonine kinase and phosphorylase involved in the regulation of the pyruvate, phosphate dikinase (PPDK) by catalyzing its phosphorylation/dephosphorylation.</text>
</comment>
<comment type="catalytic activity">
    <reaction evidence="1">
        <text>N(tele)-phospho-L-histidyl/L-threonyl-[pyruvate, phosphate dikinase] + ADP = N(tele)-phospho-L-histidyl/O-phospho-L-threonyl-[pyruvate, phosphate dikinase] + AMP + H(+)</text>
        <dbReference type="Rhea" id="RHEA:43692"/>
        <dbReference type="Rhea" id="RHEA-COMP:10650"/>
        <dbReference type="Rhea" id="RHEA-COMP:10651"/>
        <dbReference type="ChEBI" id="CHEBI:15378"/>
        <dbReference type="ChEBI" id="CHEBI:30013"/>
        <dbReference type="ChEBI" id="CHEBI:61977"/>
        <dbReference type="ChEBI" id="CHEBI:83586"/>
        <dbReference type="ChEBI" id="CHEBI:456215"/>
        <dbReference type="ChEBI" id="CHEBI:456216"/>
        <dbReference type="EC" id="2.7.11.32"/>
    </reaction>
</comment>
<comment type="catalytic activity">
    <reaction evidence="1">
        <text>N(tele)-phospho-L-histidyl/O-phospho-L-threonyl-[pyruvate, phosphate dikinase] + phosphate + H(+) = N(tele)-phospho-L-histidyl/L-threonyl-[pyruvate, phosphate dikinase] + diphosphate</text>
        <dbReference type="Rhea" id="RHEA:43696"/>
        <dbReference type="Rhea" id="RHEA-COMP:10650"/>
        <dbReference type="Rhea" id="RHEA-COMP:10651"/>
        <dbReference type="ChEBI" id="CHEBI:15378"/>
        <dbReference type="ChEBI" id="CHEBI:30013"/>
        <dbReference type="ChEBI" id="CHEBI:33019"/>
        <dbReference type="ChEBI" id="CHEBI:43474"/>
        <dbReference type="ChEBI" id="CHEBI:61977"/>
        <dbReference type="ChEBI" id="CHEBI:83586"/>
        <dbReference type="EC" id="2.7.4.27"/>
    </reaction>
</comment>
<comment type="similarity">
    <text evidence="1">Belongs to the pyruvate, phosphate/water dikinase regulatory protein family. PDRP subfamily.</text>
</comment>
<feature type="chain" id="PRO_1000149703" description="Putative pyruvate, phosphate dikinase regulatory protein">
    <location>
        <begin position="1"/>
        <end position="279"/>
    </location>
</feature>
<feature type="binding site" evidence="1">
    <location>
        <begin position="156"/>
        <end position="163"/>
    </location>
    <ligand>
        <name>ADP</name>
        <dbReference type="ChEBI" id="CHEBI:456216"/>
    </ligand>
</feature>
<name>PDRP_CHLSY</name>
<organism>
    <name type="scientific">Chloroflexus aurantiacus (strain ATCC 29364 / DSM 637 / Y-400-fl)</name>
    <dbReference type="NCBI Taxonomy" id="480224"/>
    <lineage>
        <taxon>Bacteria</taxon>
        <taxon>Bacillati</taxon>
        <taxon>Chloroflexota</taxon>
        <taxon>Chloroflexia</taxon>
        <taxon>Chloroflexales</taxon>
        <taxon>Chloroflexineae</taxon>
        <taxon>Chloroflexaceae</taxon>
        <taxon>Chloroflexus</taxon>
    </lineage>
</organism>